<comment type="function">
    <text evidence="1">Removes the formyl group from the N-terminal Met of newly synthesized proteins. Requires at least a dipeptide for an efficient rate of reaction. N-terminal L-methionine is a prerequisite for activity but the enzyme has broad specificity at other positions.</text>
</comment>
<comment type="catalytic activity">
    <reaction evidence="1">
        <text>N-terminal N-formyl-L-methionyl-[peptide] + H2O = N-terminal L-methionyl-[peptide] + formate</text>
        <dbReference type="Rhea" id="RHEA:24420"/>
        <dbReference type="Rhea" id="RHEA-COMP:10639"/>
        <dbReference type="Rhea" id="RHEA-COMP:10640"/>
        <dbReference type="ChEBI" id="CHEBI:15377"/>
        <dbReference type="ChEBI" id="CHEBI:15740"/>
        <dbReference type="ChEBI" id="CHEBI:49298"/>
        <dbReference type="ChEBI" id="CHEBI:64731"/>
        <dbReference type="EC" id="3.5.1.88"/>
    </reaction>
</comment>
<comment type="cofactor">
    <cofactor evidence="1">
        <name>Fe(2+)</name>
        <dbReference type="ChEBI" id="CHEBI:29033"/>
    </cofactor>
    <text evidence="1">Binds 1 Fe(2+) ion.</text>
</comment>
<comment type="similarity">
    <text evidence="1">Belongs to the polypeptide deformylase family.</text>
</comment>
<dbReference type="EC" id="3.5.1.88" evidence="1"/>
<dbReference type="EMBL" id="AE005673">
    <property type="protein sequence ID" value="AAK22259.1"/>
    <property type="molecule type" value="Genomic_DNA"/>
</dbReference>
<dbReference type="PIR" id="G87282">
    <property type="entry name" value="G87282"/>
</dbReference>
<dbReference type="RefSeq" id="NP_419091.1">
    <property type="nucleotide sequence ID" value="NC_002696.2"/>
</dbReference>
<dbReference type="RefSeq" id="WP_010918161.1">
    <property type="nucleotide sequence ID" value="NC_002696.2"/>
</dbReference>
<dbReference type="SMR" id="Q9ABF5"/>
<dbReference type="STRING" id="190650.CC_0272"/>
<dbReference type="EnsemblBacteria" id="AAK22259">
    <property type="protein sequence ID" value="AAK22259"/>
    <property type="gene ID" value="CC_0272"/>
</dbReference>
<dbReference type="KEGG" id="ccr:CC_0272"/>
<dbReference type="PATRIC" id="fig|190650.5.peg.269"/>
<dbReference type="eggNOG" id="COG0242">
    <property type="taxonomic scope" value="Bacteria"/>
</dbReference>
<dbReference type="HOGENOM" id="CLU_061901_2_0_5"/>
<dbReference type="BioCyc" id="CAULO:CC0272-MONOMER"/>
<dbReference type="Proteomes" id="UP000001816">
    <property type="component" value="Chromosome"/>
</dbReference>
<dbReference type="GO" id="GO:0046872">
    <property type="term" value="F:metal ion binding"/>
    <property type="evidence" value="ECO:0007669"/>
    <property type="project" value="UniProtKB-KW"/>
</dbReference>
<dbReference type="GO" id="GO:0042586">
    <property type="term" value="F:peptide deformylase activity"/>
    <property type="evidence" value="ECO:0007669"/>
    <property type="project" value="UniProtKB-UniRule"/>
</dbReference>
<dbReference type="GO" id="GO:0043686">
    <property type="term" value="P:co-translational protein modification"/>
    <property type="evidence" value="ECO:0007669"/>
    <property type="project" value="TreeGrafter"/>
</dbReference>
<dbReference type="GO" id="GO:0006412">
    <property type="term" value="P:translation"/>
    <property type="evidence" value="ECO:0007669"/>
    <property type="project" value="UniProtKB-UniRule"/>
</dbReference>
<dbReference type="CDD" id="cd00487">
    <property type="entry name" value="Pep_deformylase"/>
    <property type="match status" value="1"/>
</dbReference>
<dbReference type="Gene3D" id="3.90.45.10">
    <property type="entry name" value="Peptide deformylase"/>
    <property type="match status" value="1"/>
</dbReference>
<dbReference type="HAMAP" id="MF_00163">
    <property type="entry name" value="Pep_deformylase"/>
    <property type="match status" value="1"/>
</dbReference>
<dbReference type="InterPro" id="IPR023635">
    <property type="entry name" value="Peptide_deformylase"/>
</dbReference>
<dbReference type="InterPro" id="IPR036821">
    <property type="entry name" value="Peptide_deformylase_sf"/>
</dbReference>
<dbReference type="NCBIfam" id="TIGR00079">
    <property type="entry name" value="pept_deformyl"/>
    <property type="match status" value="1"/>
</dbReference>
<dbReference type="NCBIfam" id="NF001159">
    <property type="entry name" value="PRK00150.1-3"/>
    <property type="match status" value="1"/>
</dbReference>
<dbReference type="PANTHER" id="PTHR10458">
    <property type="entry name" value="PEPTIDE DEFORMYLASE"/>
    <property type="match status" value="1"/>
</dbReference>
<dbReference type="PANTHER" id="PTHR10458:SF22">
    <property type="entry name" value="PEPTIDE DEFORMYLASE"/>
    <property type="match status" value="1"/>
</dbReference>
<dbReference type="Pfam" id="PF01327">
    <property type="entry name" value="Pep_deformylase"/>
    <property type="match status" value="1"/>
</dbReference>
<dbReference type="PIRSF" id="PIRSF004749">
    <property type="entry name" value="Pep_def"/>
    <property type="match status" value="1"/>
</dbReference>
<dbReference type="PRINTS" id="PR01576">
    <property type="entry name" value="PDEFORMYLASE"/>
</dbReference>
<dbReference type="SUPFAM" id="SSF56420">
    <property type="entry name" value="Peptide deformylase"/>
    <property type="match status" value="1"/>
</dbReference>
<reference key="1">
    <citation type="journal article" date="2001" name="Proc. Natl. Acad. Sci. U.S.A.">
        <title>Complete genome sequence of Caulobacter crescentus.</title>
        <authorList>
            <person name="Nierman W.C."/>
            <person name="Feldblyum T.V."/>
            <person name="Laub M.T."/>
            <person name="Paulsen I.T."/>
            <person name="Nelson K.E."/>
            <person name="Eisen J.A."/>
            <person name="Heidelberg J.F."/>
            <person name="Alley M.R.K."/>
            <person name="Ohta N."/>
            <person name="Maddock J.R."/>
            <person name="Potocka I."/>
            <person name="Nelson W.C."/>
            <person name="Newton A."/>
            <person name="Stephens C."/>
            <person name="Phadke N.D."/>
            <person name="Ely B."/>
            <person name="DeBoy R.T."/>
            <person name="Dodson R.J."/>
            <person name="Durkin A.S."/>
            <person name="Gwinn M.L."/>
            <person name="Haft D.H."/>
            <person name="Kolonay J.F."/>
            <person name="Smit J."/>
            <person name="Craven M.B."/>
            <person name="Khouri H.M."/>
            <person name="Shetty J."/>
            <person name="Berry K.J."/>
            <person name="Utterback T.R."/>
            <person name="Tran K."/>
            <person name="Wolf A.M."/>
            <person name="Vamathevan J.J."/>
            <person name="Ermolaeva M.D."/>
            <person name="White O."/>
            <person name="Salzberg S.L."/>
            <person name="Venter J.C."/>
            <person name="Shapiro L."/>
            <person name="Fraser C.M."/>
        </authorList>
    </citation>
    <scope>NUCLEOTIDE SEQUENCE [LARGE SCALE GENOMIC DNA]</scope>
    <source>
        <strain>ATCC 19089 / CIP 103742 / CB 15</strain>
    </source>
</reference>
<evidence type="ECO:0000255" key="1">
    <source>
        <dbReference type="HAMAP-Rule" id="MF_00163"/>
    </source>
</evidence>
<name>DEF_CAUVC</name>
<protein>
    <recommendedName>
        <fullName evidence="1">Peptide deformylase</fullName>
        <shortName evidence="1">PDF</shortName>
        <ecNumber evidence="1">3.5.1.88</ecNumber>
    </recommendedName>
    <alternativeName>
        <fullName evidence="1">Polypeptide deformylase</fullName>
    </alternativeName>
</protein>
<gene>
    <name evidence="1" type="primary">def</name>
    <name type="ordered locus">CC_0272</name>
</gene>
<organism>
    <name type="scientific">Caulobacter vibrioides (strain ATCC 19089 / CIP 103742 / CB 15)</name>
    <name type="common">Caulobacter crescentus</name>
    <dbReference type="NCBI Taxonomy" id="190650"/>
    <lineage>
        <taxon>Bacteria</taxon>
        <taxon>Pseudomonadati</taxon>
        <taxon>Pseudomonadota</taxon>
        <taxon>Alphaproteobacteria</taxon>
        <taxon>Caulobacterales</taxon>
        <taxon>Caulobacteraceae</taxon>
        <taxon>Caulobacter</taxon>
    </lineage>
</organism>
<sequence>MAIRRILTVDNAADLATLKKISTPVEAVTDELRALMDDMLETMYDAPGIGLAAVQVGEPVRVIVMDLAREGEDKAPRYFVNPEILASSEDLQGYEEGCLSVPEYYDEVERPSKVTLRYMNYQGETVVEEAEGLFAVCIQHEMDHLEGVLFIDHLSRLRRDRAMAKVKKARRAA</sequence>
<keyword id="KW-0378">Hydrolase</keyword>
<keyword id="KW-0408">Iron</keyword>
<keyword id="KW-0479">Metal-binding</keyword>
<keyword id="KW-0648">Protein biosynthesis</keyword>
<keyword id="KW-1185">Reference proteome</keyword>
<feature type="chain" id="PRO_0000082759" description="Peptide deformylase">
    <location>
        <begin position="1"/>
        <end position="173"/>
    </location>
</feature>
<feature type="active site" evidence="1">
    <location>
        <position position="141"/>
    </location>
</feature>
<feature type="binding site" evidence="1">
    <location>
        <position position="98"/>
    </location>
    <ligand>
        <name>Fe cation</name>
        <dbReference type="ChEBI" id="CHEBI:24875"/>
    </ligand>
</feature>
<feature type="binding site" evidence="1">
    <location>
        <position position="140"/>
    </location>
    <ligand>
        <name>Fe cation</name>
        <dbReference type="ChEBI" id="CHEBI:24875"/>
    </ligand>
</feature>
<feature type="binding site" evidence="1">
    <location>
        <position position="144"/>
    </location>
    <ligand>
        <name>Fe cation</name>
        <dbReference type="ChEBI" id="CHEBI:24875"/>
    </ligand>
</feature>
<proteinExistence type="inferred from homology"/>
<accession>Q9ABF5</accession>